<protein>
    <recommendedName>
        <fullName>Electrogenic sodium bicarbonate cotransporter 1</fullName>
        <shortName>Sodium bicarbonate cotransporter</shortName>
    </recommendedName>
    <alternativeName>
        <fullName>Na(+)/HCO3(-) cotransporter</fullName>
    </alternativeName>
    <alternativeName>
        <fullName>Solute carrier family 4 member 4</fullName>
    </alternativeName>
</protein>
<name>S4A4_MOUSE</name>
<sequence length="1079" mass="121484">MEDEAVLDRGASFLKHVCDEEEVEGHHTIYIGVHVPKSYRRRRRHKRKAGHKEKKEKERISENYSDKSDVENADESSSSILKPLISPAAERIRFILGEEDDSPAPPQLFTELDELLAVDGQEMEWKETARWIKFEEKVEQGGERWSKPHVATLSLHSLFELRTCMEKGSIMLDREASSLPQLVEMIADHQIETGLLKPDLKDKVTYTLLRKHRHQTKKSNLRSLADIGKTVSSASRMFSNPDNGSPAMTHRNLTSSSLNDISDKPEKDQLKNKFMKKLPRDAEASNVLVGEVDFLDTPFIAFVRLQQAVMLGALTEVPVPTRFLFILLGPKGKAKSYHEIGRAIATLMSDEVFHDIAYKAKDRHDLIAGIDEFLDEVIVLPPGEWDPTIRIEPPKSLPSSDKRKNMYSGGENVQMNGDTPHDGGHGGGGHGDCEELQRTGRFCGGLIKDIKRKAPFFASDFYDALNIQALSAILFIYLATVTNAITFGGLLGDATDNMQGVLESFLGTAVSGAIFCLFAGQPLTILSSTGPVLVFERLLFNFSKDHNFDYLEFRLWIGLWSAFMCLVLVATDASFLVQYFTRFTEEGFSSLISFIFIYDAFKKMIKLADYYPINSDFKVGYNTHFSCACLPPDPVNLSVSNDTTLAPEDLPTISSTDMYHNVTFDWAYLSKKECVKYGGKLVGNNCDFVPDITLMSFILFLGTYTSSMAMKKFKTSRYFPTTARKLISDFAIILSILIFCVIDALVGVDTPKLIVPSEFKPTSPNRGWFVPPFGGNPWWVCLAAAIPALLVTILIFMDQQITAVIVNRKEHKLKKGAGYHLDLFWVAILMVVCSFMALPWYVAATVISIAHIDSLKMETETSAPGEQPKFLGVREQRVTGTLVFILTGLSVFMAPILKFIPMPVLYGVFLYMGVASLNGVQFMDRLKLLLMPLKHQPDFIYLRHVPLRRVHLFTFLQVLCLALLWILKSTVAAIIFPVMILALVAVRKGMDYLFSQHDLSFLDDVIPEKDKKKKEDEKKKKKKKGSLDSDNDDSDCPYSEKVPSIKIPMDIMEQQPFLSDNKPLDRERSSTFLERHTSC</sequence>
<reference key="1">
    <citation type="journal article" date="1998" name="J. Biol. Chem.">
        <title>Molecular cloning, chromosomal localization, tissue distribution, and functional expression of the human pancreatic sodium bicarbonate cotransporter.</title>
        <authorList>
            <person name="Abuladze N."/>
            <person name="Lee I."/>
            <person name="Newman D."/>
            <person name="Hwang J."/>
            <person name="Boorer K."/>
            <person name="Pushkin A."/>
            <person name="Kurtz I."/>
        </authorList>
    </citation>
    <scope>NUCLEOTIDE SEQUENCE [MRNA] (ISOFORM 1)</scope>
    <scope>TISSUE SPECIFICITY</scope>
    <source>
        <tissue>Pancreas</tissue>
    </source>
</reference>
<reference key="2">
    <citation type="journal article" date="2001" name="Am. J. Physiol.">
        <title>Molecular and functional evidence for electrogenic and electroneutral Na(+)-HCO(3)(-) cotransporters in murine duodenum.</title>
        <authorList>
            <person name="Praetorius J."/>
            <person name="Hager H."/>
            <person name="Nielsen S."/>
            <person name="Aalkjaer C."/>
            <person name="Friis U.G."/>
            <person name="Ainsworth M.A."/>
            <person name="Johansen T."/>
        </authorList>
    </citation>
    <scope>NUCLEOTIDE SEQUENCE [MRNA] (ISOFORM 2)</scope>
    <scope>TISSUE SPECIFICITY</scope>
    <scope>SUBCELLULAR LOCATION</scope>
    <scope>FUNCTION</scope>
    <scope>TRANSPORTER ACTIVITY</scope>
    <source>
        <strain>C57BL/6J</strain>
        <tissue>Duodenum</tissue>
    </source>
</reference>
<reference key="3">
    <citation type="journal article" date="2005" name="Science">
        <title>The transcriptional landscape of the mammalian genome.</title>
        <authorList>
            <person name="Carninci P."/>
            <person name="Kasukawa T."/>
            <person name="Katayama S."/>
            <person name="Gough J."/>
            <person name="Frith M.C."/>
            <person name="Maeda N."/>
            <person name="Oyama R."/>
            <person name="Ravasi T."/>
            <person name="Lenhard B."/>
            <person name="Wells C."/>
            <person name="Kodzius R."/>
            <person name="Shimokawa K."/>
            <person name="Bajic V.B."/>
            <person name="Brenner S.E."/>
            <person name="Batalov S."/>
            <person name="Forrest A.R."/>
            <person name="Zavolan M."/>
            <person name="Davis M.J."/>
            <person name="Wilming L.G."/>
            <person name="Aidinis V."/>
            <person name="Allen J.E."/>
            <person name="Ambesi-Impiombato A."/>
            <person name="Apweiler R."/>
            <person name="Aturaliya R.N."/>
            <person name="Bailey T.L."/>
            <person name="Bansal M."/>
            <person name="Baxter L."/>
            <person name="Beisel K.W."/>
            <person name="Bersano T."/>
            <person name="Bono H."/>
            <person name="Chalk A.M."/>
            <person name="Chiu K.P."/>
            <person name="Choudhary V."/>
            <person name="Christoffels A."/>
            <person name="Clutterbuck D.R."/>
            <person name="Crowe M.L."/>
            <person name="Dalla E."/>
            <person name="Dalrymple B.P."/>
            <person name="de Bono B."/>
            <person name="Della Gatta G."/>
            <person name="di Bernardo D."/>
            <person name="Down T."/>
            <person name="Engstrom P."/>
            <person name="Fagiolini M."/>
            <person name="Faulkner G."/>
            <person name="Fletcher C.F."/>
            <person name="Fukushima T."/>
            <person name="Furuno M."/>
            <person name="Futaki S."/>
            <person name="Gariboldi M."/>
            <person name="Georgii-Hemming P."/>
            <person name="Gingeras T.R."/>
            <person name="Gojobori T."/>
            <person name="Green R.E."/>
            <person name="Gustincich S."/>
            <person name="Harbers M."/>
            <person name="Hayashi Y."/>
            <person name="Hensch T.K."/>
            <person name="Hirokawa N."/>
            <person name="Hill D."/>
            <person name="Huminiecki L."/>
            <person name="Iacono M."/>
            <person name="Ikeo K."/>
            <person name="Iwama A."/>
            <person name="Ishikawa T."/>
            <person name="Jakt M."/>
            <person name="Kanapin A."/>
            <person name="Katoh M."/>
            <person name="Kawasawa Y."/>
            <person name="Kelso J."/>
            <person name="Kitamura H."/>
            <person name="Kitano H."/>
            <person name="Kollias G."/>
            <person name="Krishnan S.P."/>
            <person name="Kruger A."/>
            <person name="Kummerfeld S.K."/>
            <person name="Kurochkin I.V."/>
            <person name="Lareau L.F."/>
            <person name="Lazarevic D."/>
            <person name="Lipovich L."/>
            <person name="Liu J."/>
            <person name="Liuni S."/>
            <person name="McWilliam S."/>
            <person name="Madan Babu M."/>
            <person name="Madera M."/>
            <person name="Marchionni L."/>
            <person name="Matsuda H."/>
            <person name="Matsuzawa S."/>
            <person name="Miki H."/>
            <person name="Mignone F."/>
            <person name="Miyake S."/>
            <person name="Morris K."/>
            <person name="Mottagui-Tabar S."/>
            <person name="Mulder N."/>
            <person name="Nakano N."/>
            <person name="Nakauchi H."/>
            <person name="Ng P."/>
            <person name="Nilsson R."/>
            <person name="Nishiguchi S."/>
            <person name="Nishikawa S."/>
            <person name="Nori F."/>
            <person name="Ohara O."/>
            <person name="Okazaki Y."/>
            <person name="Orlando V."/>
            <person name="Pang K.C."/>
            <person name="Pavan W.J."/>
            <person name="Pavesi G."/>
            <person name="Pesole G."/>
            <person name="Petrovsky N."/>
            <person name="Piazza S."/>
            <person name="Reed J."/>
            <person name="Reid J.F."/>
            <person name="Ring B.Z."/>
            <person name="Ringwald M."/>
            <person name="Rost B."/>
            <person name="Ruan Y."/>
            <person name="Salzberg S.L."/>
            <person name="Sandelin A."/>
            <person name="Schneider C."/>
            <person name="Schoenbach C."/>
            <person name="Sekiguchi K."/>
            <person name="Semple C.A."/>
            <person name="Seno S."/>
            <person name="Sessa L."/>
            <person name="Sheng Y."/>
            <person name="Shibata Y."/>
            <person name="Shimada H."/>
            <person name="Shimada K."/>
            <person name="Silva D."/>
            <person name="Sinclair B."/>
            <person name="Sperling S."/>
            <person name="Stupka E."/>
            <person name="Sugiura K."/>
            <person name="Sultana R."/>
            <person name="Takenaka Y."/>
            <person name="Taki K."/>
            <person name="Tammoja K."/>
            <person name="Tan S.L."/>
            <person name="Tang S."/>
            <person name="Taylor M.S."/>
            <person name="Tegner J."/>
            <person name="Teichmann S.A."/>
            <person name="Ueda H.R."/>
            <person name="van Nimwegen E."/>
            <person name="Verardo R."/>
            <person name="Wei C.L."/>
            <person name="Yagi K."/>
            <person name="Yamanishi H."/>
            <person name="Zabarovsky E."/>
            <person name="Zhu S."/>
            <person name="Zimmer A."/>
            <person name="Hide W."/>
            <person name="Bult C."/>
            <person name="Grimmond S.M."/>
            <person name="Teasdale R.D."/>
            <person name="Liu E.T."/>
            <person name="Brusic V."/>
            <person name="Quackenbush J."/>
            <person name="Wahlestedt C."/>
            <person name="Mattick J.S."/>
            <person name="Hume D.A."/>
            <person name="Kai C."/>
            <person name="Sasaki D."/>
            <person name="Tomaru Y."/>
            <person name="Fukuda S."/>
            <person name="Kanamori-Katayama M."/>
            <person name="Suzuki M."/>
            <person name="Aoki J."/>
            <person name="Arakawa T."/>
            <person name="Iida J."/>
            <person name="Imamura K."/>
            <person name="Itoh M."/>
            <person name="Kato T."/>
            <person name="Kawaji H."/>
            <person name="Kawagashira N."/>
            <person name="Kawashima T."/>
            <person name="Kojima M."/>
            <person name="Kondo S."/>
            <person name="Konno H."/>
            <person name="Nakano K."/>
            <person name="Ninomiya N."/>
            <person name="Nishio T."/>
            <person name="Okada M."/>
            <person name="Plessy C."/>
            <person name="Shibata K."/>
            <person name="Shiraki T."/>
            <person name="Suzuki S."/>
            <person name="Tagami M."/>
            <person name="Waki K."/>
            <person name="Watahiki A."/>
            <person name="Okamura-Oho Y."/>
            <person name="Suzuki H."/>
            <person name="Kawai J."/>
            <person name="Hayashizaki Y."/>
        </authorList>
    </citation>
    <scope>NUCLEOTIDE SEQUENCE [LARGE SCALE MRNA] (ISOFORM 3)</scope>
    <scope>NUCLEOTIDE SEQUENCE [LARGE SCALE MRNA] OF 1-400 (ISOFORM 1)</scope>
    <source>
        <strain>C57BL/6J</strain>
        <tissue>Kidney</tissue>
        <tissue>Medulla oblongata</tissue>
    </source>
</reference>
<reference key="4">
    <citation type="submission" date="2007-04" db="UniProtKB">
        <authorList>
            <person name="Lubec G."/>
            <person name="Kang S.U."/>
        </authorList>
    </citation>
    <scope>PROTEIN SEQUENCE OF 1-9; 60-67; 168-174; 323-331; 343-359; 607-618; 753-766; 857-869 AND 935-943</scope>
    <scope>IDENTIFICATION BY MASS SPECTROMETRY</scope>
    <source>
        <strain>C57BL/6J</strain>
        <tissue>Brain</tissue>
    </source>
</reference>
<reference key="5">
    <citation type="journal article" date="2004" name="Genome Res.">
        <title>The status, quality, and expansion of the NIH full-length cDNA project: the Mammalian Gene Collection (MGC).</title>
        <authorList>
            <consortium name="The MGC Project Team"/>
        </authorList>
    </citation>
    <scope>NUCLEOTIDE SEQUENCE [LARGE SCALE MRNA] OF 382-1079</scope>
    <source>
        <strain>FVB/N</strain>
        <tissue>Kidney</tissue>
    </source>
</reference>
<reference key="6">
    <citation type="journal article" date="2003" name="Am. J. Physiol.">
        <title>Role of glycosylation in the renal electrogenic Na+-HCO3-cotransporter (NBCe1).</title>
        <authorList>
            <person name="Choi I."/>
            <person name="Hu L."/>
            <person name="Rojas J.D."/>
            <person name="Schmitt B.M."/>
            <person name="Boron W.F."/>
        </authorList>
    </citation>
    <scope>GLYCOSYLATION</scope>
</reference>
<reference key="7">
    <citation type="journal article" date="2003" name="Am. J. Physiol.">
        <title>cAMP-mediated regulation of murine intestinal/pancreatic Na+/HCO3-cotransporter subtype pNBC1.</title>
        <authorList>
            <person name="Bachmann O."/>
            <person name="Rossmann H."/>
            <person name="Berger U.V."/>
            <person name="Colledge W.H."/>
            <person name="Ratcliff R."/>
            <person name="Evans M.J."/>
            <person name="Gregor M."/>
            <person name="Seidler U."/>
        </authorList>
    </citation>
    <scope>ACTIVITY REGULATION</scope>
    <scope>TISSUE SPECIFICITY</scope>
    <scope>FUNCTION</scope>
    <scope>TRANSPORTER ACTIVITY</scope>
</reference>
<reference key="8">
    <citation type="journal article" date="2003" name="Biochem. Biophys. Res. Commun.">
        <title>Expression of Na+/HCO3- cotransporter and its role in pH regulation in mouse parotid acinar cells.</title>
        <authorList>
            <person name="Kim Y.-B."/>
            <person name="Yang B.H."/>
            <person name="Piao Z.G."/>
            <person name="Oh S.B."/>
            <person name="Kim J.S."/>
            <person name="Park K."/>
        </authorList>
    </citation>
    <scope>TISSUE SPECIFICITY</scope>
</reference>
<reference key="9">
    <citation type="journal article" date="2003" name="Biochemistry">
        <title>Direct extracellular interaction between carbonic anhydrase IV and the human NBC1 sodium/bicarbonate co-transporter.</title>
        <authorList>
            <person name="Alvarez B.V."/>
            <person name="Loiselle F.B."/>
            <person name="Supuran C.T."/>
            <person name="Schwartz G.J."/>
            <person name="Casey J.R."/>
        </authorList>
    </citation>
    <scope>INTERACTION WITH CA4</scope>
</reference>
<reference key="10">
    <citation type="journal article" date="2004" name="J. Physiol. (Lond.)">
        <title>Molecular mechanism of kNBC1-carbonic anhydrase II interaction in proximal tubule cells.</title>
        <authorList>
            <person name="Pushkin A."/>
            <person name="Abuladze N."/>
            <person name="Gross E."/>
            <person name="Newman D."/>
            <person name="Tatishchev S."/>
            <person name="Lee I."/>
            <person name="Fedotoff O."/>
            <person name="Bondar G."/>
            <person name="Azimov R."/>
            <person name="Ngyuen M."/>
            <person name="Kurtz I."/>
        </authorList>
    </citation>
    <scope>INTERACTION WITH CA2</scope>
</reference>
<reference key="11">
    <citation type="journal article" date="2006" name="Proc. Natl. Acad. Sci. U.S.A.">
        <title>IRBIT, an inositol 1,4,5-trisphosphate receptor-binding protein, specifically binds to and activates pancreas-type Na+/HCO3-cotransporter 1 (pNBC1).</title>
        <authorList>
            <person name="Shirakabe K."/>
            <person name="Priori G."/>
            <person name="Yamada H."/>
            <person name="Ando H."/>
            <person name="Horita S."/>
            <person name="Fujita T."/>
            <person name="Fujimoto I."/>
            <person name="Mizutani A."/>
            <person name="Seki G."/>
            <person name="Mikoshiba K."/>
        </authorList>
    </citation>
    <scope>INTERACTION WITH AHCYL1</scope>
</reference>
<reference key="12">
    <citation type="journal article" date="2007" name="Proc. Natl. Acad. Sci. U.S.A.">
        <title>Large-scale phosphorylation analysis of mouse liver.</title>
        <authorList>
            <person name="Villen J."/>
            <person name="Beausoleil S.A."/>
            <person name="Gerber S.A."/>
            <person name="Gygi S.P."/>
        </authorList>
    </citation>
    <scope>PHOSPHORYLATION [LARGE SCALE ANALYSIS] AT THR-254; SER-257; SER-262; SER-1029 AND SER-1034</scope>
    <scope>IDENTIFICATION BY MASS SPECTROMETRY [LARGE SCALE ANALYSIS]</scope>
    <source>
        <tissue>Liver</tissue>
    </source>
</reference>
<reference key="13">
    <citation type="journal article" date="2008" name="J. Proteome Res.">
        <title>Large-scale identification and evolution indexing of tyrosine phosphorylation sites from murine brain.</title>
        <authorList>
            <person name="Ballif B.A."/>
            <person name="Carey G.R."/>
            <person name="Sunyaev S.R."/>
            <person name="Gygi S.P."/>
        </authorList>
    </citation>
    <scope>PHOSPHORYLATION [LARGE SCALE ANALYSIS] AT TYR-30</scope>
    <scope>IDENTIFICATION BY MASS SPECTROMETRY [LARGE SCALE ANALYSIS]</scope>
    <source>
        <tissue>Brain</tissue>
    </source>
</reference>
<reference key="14">
    <citation type="journal article" date="2008" name="J. Proteome Res.">
        <title>Specific phosphopeptide enrichment with immobilized titanium ion affinity chromatography adsorbent for phosphoproteome analysis.</title>
        <authorList>
            <person name="Zhou H."/>
            <person name="Ye M."/>
            <person name="Dong J."/>
            <person name="Han G."/>
            <person name="Jiang X."/>
            <person name="Wu R."/>
            <person name="Zou H."/>
        </authorList>
    </citation>
    <scope>IDENTIFICATION BY MASS SPECTROMETRY [LARGE SCALE ANALYSIS]</scope>
    <source>
        <tissue>Liver</tissue>
    </source>
</reference>
<reference key="15">
    <citation type="journal article" date="2009" name="J. Clin. Invest.">
        <title>IRBIT coordinates epithelial fluid and HCO3- secretion by stimulating the transporters pNBC1 and CFTR in the murine pancreatic duct.</title>
        <authorList>
            <person name="Yang D."/>
            <person name="Shcheynikov N."/>
            <person name="Zeng W."/>
            <person name="Ohana E."/>
            <person name="So I."/>
            <person name="Ando H."/>
            <person name="Mizutani A."/>
            <person name="Mikoshiba K."/>
            <person name="Muallem S."/>
        </authorList>
    </citation>
    <scope>FUNCTION</scope>
    <scope>TISSUE SPECIFICITY</scope>
    <scope>INTERACTION WITH AHCYL1</scope>
    <scope>TRANSPORTER ACTIVITY</scope>
</reference>
<reference key="16">
    <citation type="journal article" date="2010" name="Cell">
        <title>A tissue-specific atlas of mouse protein phosphorylation and expression.</title>
        <authorList>
            <person name="Huttlin E.L."/>
            <person name="Jedrychowski M.P."/>
            <person name="Elias J.E."/>
            <person name="Goswami T."/>
            <person name="Rad R."/>
            <person name="Beausoleil S.A."/>
            <person name="Villen J."/>
            <person name="Haas W."/>
            <person name="Sowa M.E."/>
            <person name="Gygi S.P."/>
        </authorList>
    </citation>
    <scope>PHOSPHORYLATION [LARGE SCALE ANALYSIS] AT SER-61; SER-65; SER-68; SER-223; SER-232; SER-233; SER-245; THR-254; SER-256; SER-257; SER-262; SER-1026; SER-1029; SER-1034 AND SER-1044</scope>
    <scope>PHOSPHORYLATION [LARGE SCALE ANALYSIS] AT SER-21 (ISOFORMS 2 AND 3)</scope>
    <scope>IDENTIFICATION BY MASS SPECTROMETRY [LARGE SCALE ANALYSIS]</scope>
    <source>
        <tissue>Brain</tissue>
        <tissue>Brown adipose tissue</tissue>
        <tissue>Heart</tissue>
        <tissue>Kidney</tissue>
        <tissue>Liver</tissue>
        <tissue>Lung</tissue>
        <tissue>Testis</tissue>
    </source>
</reference>
<reference key="17">
    <citation type="journal article" date="2011" name="J. Clin. Invest.">
        <title>IRBIT governs epithelial secretion in mice by antagonizing the WNK/SPAK kinase pathway.</title>
        <authorList>
            <person name="Yang D."/>
            <person name="Li Q."/>
            <person name="So I."/>
            <person name="Huang C.L."/>
            <person name="Ando H."/>
            <person name="Mizutani A."/>
            <person name="Seki G."/>
            <person name="Mikoshiba K."/>
            <person name="Thomas P.J."/>
            <person name="Muallem S."/>
        </authorList>
    </citation>
    <scope>INTERACTION WITH AHCYL1</scope>
    <scope>SUBCELLULAR LOCATION</scope>
    <scope>PHOSPHORYLATION</scope>
</reference>
<comment type="function">
    <text evidence="7 8 14 16">Electrogenic sodium/bicarbonate cotransporter with a Na(+):HCO3(-) stoichiometry varying from 1:2 to 1:3. May regulate bicarbonate influx/efflux at the basolateral membrane of cells and regulate intracellular pH.</text>
</comment>
<comment type="catalytic activity">
    <reaction evidence="8 14">
        <text>2 hydrogencarbonate(out) + Na(+)(out) = 2 hydrogencarbonate(in) + Na(+)(in)</text>
        <dbReference type="Rhea" id="RHEA:72215"/>
        <dbReference type="ChEBI" id="CHEBI:17544"/>
        <dbReference type="ChEBI" id="CHEBI:29101"/>
    </reaction>
</comment>
<comment type="catalytic activity">
    <reaction evidence="8 14">
        <text>3 hydrogencarbonate(out) + Na(+)(out) = 3 hydrogencarbonate(in) + Na(+)(in)</text>
        <dbReference type="Rhea" id="RHEA:72219"/>
        <dbReference type="ChEBI" id="CHEBI:17544"/>
        <dbReference type="ChEBI" id="CHEBI:29101"/>
    </reaction>
</comment>
<comment type="catalytic activity">
    <molecule>Isoform 2</molecule>
    <reaction evidence="7">
        <text>2 hydrogencarbonate(out) + Na(+)(out) = 2 hydrogencarbonate(in) + Na(+)(in)</text>
        <dbReference type="Rhea" id="RHEA:72215"/>
        <dbReference type="ChEBI" id="CHEBI:17544"/>
        <dbReference type="ChEBI" id="CHEBI:29101"/>
    </reaction>
</comment>
<comment type="catalytic activity">
    <molecule>Isoform 2</molecule>
    <reaction evidence="7">
        <text>3 hydrogencarbonate(out) + Na(+)(out) = 3 hydrogencarbonate(in) + Na(+)(in)</text>
        <dbReference type="Rhea" id="RHEA:72219"/>
        <dbReference type="ChEBI" id="CHEBI:17544"/>
        <dbReference type="ChEBI" id="CHEBI:29101"/>
    </reaction>
</comment>
<comment type="activity regulation">
    <text evidence="8">Activated by cyclic AMP.</text>
</comment>
<comment type="subunit">
    <text evidence="2 4 11 12 13 14 15">Homodimer (By similarity). Interacts with CA2/carbonic anhydrase 2 and CA4/carbonic anhydrase 4 which may regulate transporter activity (PubMed:14567693, PubMed:15218065). Isoform 1 but not isoform 2 interacts with AHCYL1 (via PEST domain when phosphorylated); the interaction increases SLC4A4 isoform 1 activity (PubMed:16769890, PubMed:19033647, PubMed:21317537). Interacts with AHCYL2 (By similarity).</text>
</comment>
<comment type="interaction">
    <interactant intactId="EBI-771342">
        <id>O88343</id>
    </interactant>
    <interactant intactId="EBI-6859308">
        <id>Q64444</id>
        <label>Ca4</label>
    </interactant>
    <organismsDiffer>false</organismsDiffer>
    <experiments>2</experiments>
</comment>
<comment type="subcellular location">
    <subcellularLocation>
        <location evidence="7">Basolateral cell membrane</location>
        <topology evidence="5">Multi-pass membrane protein</topology>
    </subcellularLocation>
    <subcellularLocation>
        <location evidence="15">Cell membrane</location>
        <topology evidence="5">Multi-pass membrane protein</topology>
    </subcellularLocation>
</comment>
<comment type="alternative products">
    <event type="alternative splicing"/>
    <isoform>
        <id>O88343-1</id>
        <name>1</name>
        <name>pNBC</name>
        <sequence type="displayed"/>
    </isoform>
    <isoform>
        <id>O88343-2</id>
        <name>2</name>
        <name>kNBC</name>
        <sequence type="described" ref="VSP_016709 VSP_016710"/>
    </isoform>
    <isoform>
        <id>O88343-3</id>
        <name>3</name>
        <sequence type="described" ref="VSP_016709 VSP_016710 VSP_016711 VSP_016712"/>
    </isoform>
</comment>
<comment type="tissue specificity">
    <text evidence="7 8 10 14 16">Isoform 1 is specifically expressed in pancreatic ducts and acini (PubMed:19033647). Also expressed in parotid acinar cells and in the colonic crypts.</text>
</comment>
<comment type="PTM">
    <text evidence="4 15">Phosphorylation of Ser-1026 by PKA increases the binding of CA2 and changes the Na(+):HCO3(-) stoichiometry of the transporter from 3:1 to 2:1. Phosphorylated in presence of STK39 and dephosphorylated in presence of PP1 phosphatase; phosphorylation seems to inhibit SLC4A4 activity (PubMed:21317537).</text>
</comment>
<comment type="PTM">
    <text evidence="9">N-glycosylated. May not be necessary for the transporter basic functions.</text>
</comment>
<comment type="similarity">
    <text evidence="19">Belongs to the anion exchanger (TC 2.A.31) family.</text>
</comment>
<accession>O88343</accession>
<accession>Q3USE4</accession>
<accession>Q8BUG0</accession>
<accession>Q8QZR9</accession>
<accession>Q9R1C4</accession>
<gene>
    <name type="primary">Slc4a4</name>
    <name type="synonym">Nbc1</name>
    <name type="synonym">Nbce1</name>
</gene>
<proteinExistence type="evidence at protein level"/>
<dbReference type="EMBL" id="AF020195">
    <property type="protein sequence ID" value="AAC40160.1"/>
    <property type="molecule type" value="mRNA"/>
</dbReference>
<dbReference type="EMBL" id="AF141934">
    <property type="protein sequence ID" value="AAD31036.3"/>
    <property type="molecule type" value="mRNA"/>
</dbReference>
<dbReference type="EMBL" id="AK085387">
    <property type="protein sequence ID" value="BAC39437.1"/>
    <property type="molecule type" value="mRNA"/>
</dbReference>
<dbReference type="EMBL" id="AK140443">
    <property type="protein sequence ID" value="BAE24389.1"/>
    <property type="molecule type" value="mRNA"/>
</dbReference>
<dbReference type="EMBL" id="BC026592">
    <property type="protein sequence ID" value="AAH26592.1"/>
    <property type="molecule type" value="mRNA"/>
</dbReference>
<dbReference type="CCDS" id="CCDS19406.1">
    <molecule id="O88343-1"/>
</dbReference>
<dbReference type="CCDS" id="CCDS89936.1">
    <molecule id="O88343-2"/>
</dbReference>
<dbReference type="PIR" id="T14031">
    <property type="entry name" value="T14031"/>
</dbReference>
<dbReference type="RefSeq" id="NP_001129732.1">
    <property type="nucleotide sequence ID" value="NM_001136260.1"/>
</dbReference>
<dbReference type="RefSeq" id="NP_001346141.1">
    <molecule id="O88343-2"/>
    <property type="nucleotide sequence ID" value="NM_001359212.1"/>
</dbReference>
<dbReference type="RefSeq" id="NP_061230.2">
    <molecule id="O88343-1"/>
    <property type="nucleotide sequence ID" value="NM_018760.2"/>
</dbReference>
<dbReference type="SMR" id="O88343"/>
<dbReference type="BioGRID" id="207650">
    <property type="interactions" value="15"/>
</dbReference>
<dbReference type="FunCoup" id="O88343">
    <property type="interactions" value="432"/>
</dbReference>
<dbReference type="IntAct" id="O88343">
    <property type="interactions" value="6"/>
</dbReference>
<dbReference type="MINT" id="O88343"/>
<dbReference type="STRING" id="10090.ENSMUSP00000121744"/>
<dbReference type="GlyCosmos" id="O88343">
    <property type="glycosylation" value="2 sites, No reported glycans"/>
</dbReference>
<dbReference type="GlyGen" id="O88343">
    <property type="glycosylation" value="3 sites, 2 N-linked glycans (2 sites), 1 O-linked glycan (1 site)"/>
</dbReference>
<dbReference type="iPTMnet" id="O88343"/>
<dbReference type="PhosphoSitePlus" id="O88343"/>
<dbReference type="SwissPalm" id="O88343"/>
<dbReference type="jPOST" id="O88343"/>
<dbReference type="PaxDb" id="10090-ENSMUSP00000121744"/>
<dbReference type="PeptideAtlas" id="O88343"/>
<dbReference type="ProteomicsDB" id="260907">
    <molecule id="O88343-1"/>
</dbReference>
<dbReference type="ProteomicsDB" id="260908">
    <molecule id="O88343-2"/>
</dbReference>
<dbReference type="ProteomicsDB" id="260909">
    <molecule id="O88343-3"/>
</dbReference>
<dbReference type="Antibodypedia" id="24400">
    <property type="antibodies" value="179 antibodies from 29 providers"/>
</dbReference>
<dbReference type="DNASU" id="54403"/>
<dbReference type="Ensembl" id="ENSMUST00000113216.9">
    <molecule id="O88343-3"/>
    <property type="protein sequence ID" value="ENSMUSP00000108842.3"/>
    <property type="gene ID" value="ENSMUSG00000060961.17"/>
</dbReference>
<dbReference type="Ensembl" id="ENSMUST00000130041.8">
    <molecule id="O88343-2"/>
    <property type="protein sequence ID" value="ENSMUSP00000118413.2"/>
    <property type="gene ID" value="ENSMUSG00000060961.17"/>
</dbReference>
<dbReference type="Ensembl" id="ENSMUST00000148750.8">
    <molecule id="O88343-1"/>
    <property type="protein sequence ID" value="ENSMUSP00000119325.2"/>
    <property type="gene ID" value="ENSMUSG00000060961.17"/>
</dbReference>
<dbReference type="GeneID" id="54403"/>
<dbReference type="KEGG" id="mmu:54403"/>
<dbReference type="UCSC" id="uc008yak.1">
    <molecule id="O88343-1"/>
    <property type="organism name" value="mouse"/>
</dbReference>
<dbReference type="AGR" id="MGI:1927555"/>
<dbReference type="CTD" id="8671"/>
<dbReference type="MGI" id="MGI:1927555">
    <property type="gene designation" value="Slc4a4"/>
</dbReference>
<dbReference type="VEuPathDB" id="HostDB:ENSMUSG00000060961"/>
<dbReference type="eggNOG" id="KOG1172">
    <property type="taxonomic scope" value="Eukaryota"/>
</dbReference>
<dbReference type="GeneTree" id="ENSGT00940000156290"/>
<dbReference type="HOGENOM" id="CLU_002289_5_2_1"/>
<dbReference type="InParanoid" id="O88343"/>
<dbReference type="OMA" id="LCMAPAN"/>
<dbReference type="PhylomeDB" id="O88343"/>
<dbReference type="Reactome" id="R-MMU-425381">
    <property type="pathway name" value="Bicarbonate transporters"/>
</dbReference>
<dbReference type="BioGRID-ORCS" id="54403">
    <property type="hits" value="4 hits in 79 CRISPR screens"/>
</dbReference>
<dbReference type="CD-CODE" id="CE726F99">
    <property type="entry name" value="Postsynaptic density"/>
</dbReference>
<dbReference type="ChiTaRS" id="Slc4a4">
    <property type="organism name" value="mouse"/>
</dbReference>
<dbReference type="PRO" id="PR:O88343"/>
<dbReference type="Proteomes" id="UP000000589">
    <property type="component" value="Chromosome 5"/>
</dbReference>
<dbReference type="RNAct" id="O88343">
    <property type="molecule type" value="protein"/>
</dbReference>
<dbReference type="Bgee" id="ENSMUSG00000060961">
    <property type="expression patterns" value="Expressed in ciliary body and 246 other cell types or tissues"/>
</dbReference>
<dbReference type="ExpressionAtlas" id="O88343">
    <property type="expression patterns" value="baseline and differential"/>
</dbReference>
<dbReference type="GO" id="GO:0016323">
    <property type="term" value="C:basolateral plasma membrane"/>
    <property type="evidence" value="ECO:0000314"/>
    <property type="project" value="UniProtKB"/>
</dbReference>
<dbReference type="GO" id="GO:0005886">
    <property type="term" value="C:plasma membrane"/>
    <property type="evidence" value="ECO:0000304"/>
    <property type="project" value="MGI"/>
</dbReference>
<dbReference type="GO" id="GO:0008509">
    <property type="term" value="F:monoatomic anion transmembrane transporter activity"/>
    <property type="evidence" value="ECO:0007669"/>
    <property type="project" value="InterPro"/>
</dbReference>
<dbReference type="GO" id="GO:0008510">
    <property type="term" value="F:sodium:bicarbonate symporter activity"/>
    <property type="evidence" value="ECO:0000314"/>
    <property type="project" value="UniProtKB"/>
</dbReference>
<dbReference type="GO" id="GO:0005452">
    <property type="term" value="F:solute:inorganic anion antiporter activity"/>
    <property type="evidence" value="ECO:0007669"/>
    <property type="project" value="InterPro"/>
</dbReference>
<dbReference type="GO" id="GO:0015701">
    <property type="term" value="P:bicarbonate transport"/>
    <property type="evidence" value="ECO:0000316"/>
    <property type="project" value="MGI"/>
</dbReference>
<dbReference type="GO" id="GO:0051649">
    <property type="term" value="P:establishment of localization in cell"/>
    <property type="evidence" value="ECO:0000316"/>
    <property type="project" value="MGI"/>
</dbReference>
<dbReference type="GO" id="GO:0045821">
    <property type="term" value="P:positive regulation of glycolytic process"/>
    <property type="evidence" value="ECO:0000315"/>
    <property type="project" value="ARUK-UCL"/>
</dbReference>
<dbReference type="GO" id="GO:0051453">
    <property type="term" value="P:regulation of intracellular pH"/>
    <property type="evidence" value="ECO:0000315"/>
    <property type="project" value="ARUK-UCL"/>
</dbReference>
<dbReference type="GO" id="GO:0042391">
    <property type="term" value="P:regulation of membrane potential"/>
    <property type="evidence" value="ECO:0000315"/>
    <property type="project" value="ARUK-UCL"/>
</dbReference>
<dbReference type="GO" id="GO:0006885">
    <property type="term" value="P:regulation of pH"/>
    <property type="evidence" value="ECO:0000304"/>
    <property type="project" value="MGI"/>
</dbReference>
<dbReference type="GO" id="GO:0006814">
    <property type="term" value="P:sodium ion transport"/>
    <property type="evidence" value="ECO:0000314"/>
    <property type="project" value="MGI"/>
</dbReference>
<dbReference type="FunFam" id="1.10.287.570:FF:000001">
    <property type="entry name" value="Anion exchange protein"/>
    <property type="match status" value="1"/>
</dbReference>
<dbReference type="FunFam" id="3.40.930.10:FF:000002">
    <property type="entry name" value="Anion exchange protein"/>
    <property type="match status" value="1"/>
</dbReference>
<dbReference type="Gene3D" id="1.10.287.570">
    <property type="entry name" value="Helical hairpin bin"/>
    <property type="match status" value="1"/>
</dbReference>
<dbReference type="Gene3D" id="3.40.930.10">
    <property type="entry name" value="Mannitol-specific EII, Chain A"/>
    <property type="match status" value="1"/>
</dbReference>
<dbReference type="InterPro" id="IPR013769">
    <property type="entry name" value="Band3_cytoplasmic_dom"/>
</dbReference>
<dbReference type="InterPro" id="IPR011531">
    <property type="entry name" value="HCO3_transpt-like_TM_dom"/>
</dbReference>
<dbReference type="InterPro" id="IPR003020">
    <property type="entry name" value="HCO3_transpt_euk"/>
</dbReference>
<dbReference type="InterPro" id="IPR003024">
    <property type="entry name" value="Na/HCO3_transpt"/>
</dbReference>
<dbReference type="InterPro" id="IPR016152">
    <property type="entry name" value="PTrfase/Anion_transptr"/>
</dbReference>
<dbReference type="NCBIfam" id="TIGR00834">
    <property type="entry name" value="ae"/>
    <property type="match status" value="1"/>
</dbReference>
<dbReference type="PANTHER" id="PTHR11453">
    <property type="entry name" value="ANION EXCHANGE PROTEIN"/>
    <property type="match status" value="1"/>
</dbReference>
<dbReference type="PANTHER" id="PTHR11453:SF10">
    <property type="entry name" value="ELECTROGENIC SODIUM BICARBONATE COTRANSPORTER 1"/>
    <property type="match status" value="1"/>
</dbReference>
<dbReference type="Pfam" id="PF07565">
    <property type="entry name" value="Band_3_cyto"/>
    <property type="match status" value="1"/>
</dbReference>
<dbReference type="Pfam" id="PF00955">
    <property type="entry name" value="HCO3_cotransp"/>
    <property type="match status" value="1"/>
</dbReference>
<dbReference type="PRINTS" id="PR01231">
    <property type="entry name" value="HCO3TRNSPORT"/>
</dbReference>
<dbReference type="PRINTS" id="PR01232">
    <property type="entry name" value="NAHCO3TRSPRT"/>
</dbReference>
<dbReference type="SUPFAM" id="SSF55804">
    <property type="entry name" value="Phoshotransferase/anion transport protein"/>
    <property type="match status" value="1"/>
</dbReference>
<feature type="chain" id="PRO_0000079228" description="Electrogenic sodium bicarbonate cotransporter 1">
    <location>
        <begin position="1"/>
        <end position="1079"/>
    </location>
</feature>
<feature type="topological domain" description="Cytoplasmic" evidence="4">
    <location>
        <begin position="1"/>
        <end position="466"/>
    </location>
</feature>
<feature type="transmembrane region" description="Helical; Name=1" evidence="4">
    <location>
        <begin position="467"/>
        <end position="491"/>
    </location>
</feature>
<feature type="topological domain" description="Extracellular" evidence="4">
    <location>
        <begin position="492"/>
        <end position="501"/>
    </location>
</feature>
<feature type="transmembrane region" description="Helical; Name=2" evidence="4">
    <location>
        <begin position="502"/>
        <end position="520"/>
    </location>
</feature>
<feature type="topological domain" description="Cytoplasmic" evidence="4">
    <location>
        <position position="521"/>
    </location>
</feature>
<feature type="transmembrane region" description="Discontinuously helical; Name=3" evidence="4">
    <location>
        <begin position="522"/>
        <end position="542"/>
    </location>
</feature>
<feature type="topological domain" description="Extracellular" evidence="4">
    <location>
        <begin position="543"/>
        <end position="550"/>
    </location>
</feature>
<feature type="transmembrane region" description="Helical; Name=4" evidence="4">
    <location>
        <begin position="551"/>
        <end position="571"/>
    </location>
</feature>
<feature type="topological domain" description="Cytoplasmic" evidence="4">
    <location>
        <begin position="572"/>
        <end position="585"/>
    </location>
</feature>
<feature type="transmembrane region" description="Helical; Name=5" evidence="4">
    <location>
        <begin position="586"/>
        <end position="609"/>
    </location>
</feature>
<feature type="topological domain" description="Extracellular" evidence="4">
    <location>
        <begin position="610"/>
        <end position="692"/>
    </location>
</feature>
<feature type="transmembrane region" description="Helical; Name=6" evidence="4">
    <location>
        <begin position="693"/>
        <end position="710"/>
    </location>
</feature>
<feature type="topological domain" description="Cytoplasmic" evidence="4">
    <location>
        <begin position="711"/>
        <end position="725"/>
    </location>
</feature>
<feature type="transmembrane region" description="Helical; Name=7" evidence="4">
    <location>
        <begin position="726"/>
        <end position="745"/>
    </location>
</feature>
<feature type="topological domain" description="Extracellular" evidence="4">
    <location>
        <begin position="746"/>
        <end position="779"/>
    </location>
</feature>
<feature type="transmembrane region" description="Helical; Name=8" evidence="4">
    <location>
        <begin position="780"/>
        <end position="807"/>
    </location>
</feature>
<feature type="topological domain" description="Cytoplasmic" evidence="4">
    <location>
        <begin position="808"/>
        <end position="819"/>
    </location>
</feature>
<feature type="transmembrane region" description="Helical; Name=9" evidence="4">
    <location>
        <begin position="820"/>
        <end position="836"/>
    </location>
</feature>
<feature type="topological domain" description="Extracellular" evidence="4">
    <location>
        <position position="837"/>
    </location>
</feature>
<feature type="transmembrane region" description="Discontinuously helical; Name=10" evidence="4">
    <location>
        <begin position="838"/>
        <end position="855"/>
    </location>
</feature>
<feature type="topological domain" description="Cytoplasmic" evidence="4">
    <location>
        <begin position="856"/>
        <end position="877"/>
    </location>
</feature>
<feature type="transmembrane region" description="Helical; Name=11" evidence="4">
    <location>
        <begin position="878"/>
        <end position="894"/>
    </location>
</feature>
<feature type="topological domain" description="Extracellular" evidence="4">
    <location>
        <begin position="895"/>
        <end position="901"/>
    </location>
</feature>
<feature type="transmembrane region" description="Helical; Name=12" evidence="4">
    <location>
        <begin position="902"/>
        <end position="918"/>
    </location>
</feature>
<feature type="topological domain" description="Cytoplasmic" evidence="4">
    <location>
        <begin position="919"/>
        <end position="960"/>
    </location>
</feature>
<feature type="intramembrane region" description="Discontinuously helical" evidence="4">
    <location>
        <begin position="961"/>
        <end position="986"/>
    </location>
</feature>
<feature type="topological domain" description="Cytoplasmic" evidence="4">
    <location>
        <begin position="987"/>
        <end position="1079"/>
    </location>
</feature>
<feature type="region of interest" description="Required for interaction with AHCYL1" evidence="4">
    <location>
        <begin position="1"/>
        <end position="62"/>
    </location>
</feature>
<feature type="region of interest" description="Disordered" evidence="6">
    <location>
        <begin position="39"/>
        <end position="78"/>
    </location>
</feature>
<feature type="region of interest" description="Disordered" evidence="6">
    <location>
        <begin position="235"/>
        <end position="266"/>
    </location>
</feature>
<feature type="region of interest" description="Interaction with CA4" evidence="1">
    <location>
        <begin position="748"/>
        <end position="779"/>
    </location>
</feature>
<feature type="region of interest" description="CA2-binding" evidence="1">
    <location>
        <begin position="1002"/>
        <end position="1004"/>
    </location>
</feature>
<feature type="region of interest" description="Disordered" evidence="6">
    <location>
        <begin position="1012"/>
        <end position="1079"/>
    </location>
</feature>
<feature type="region of interest" description="CA2-binding" evidence="1">
    <location>
        <begin position="1030"/>
        <end position="1033"/>
    </location>
</feature>
<feature type="region of interest" description="Required for basolateral targeting" evidence="1">
    <location>
        <begin position="1057"/>
        <end position="1059"/>
    </location>
</feature>
<feature type="compositionally biased region" description="Basic residues" evidence="6">
    <location>
        <begin position="39"/>
        <end position="52"/>
    </location>
</feature>
<feature type="compositionally biased region" description="Basic and acidic residues" evidence="6">
    <location>
        <begin position="53"/>
        <end position="70"/>
    </location>
</feature>
<feature type="compositionally biased region" description="Polar residues" evidence="6">
    <location>
        <begin position="251"/>
        <end position="260"/>
    </location>
</feature>
<feature type="compositionally biased region" description="Basic and acidic residues" evidence="6">
    <location>
        <begin position="1062"/>
        <end position="1079"/>
    </location>
</feature>
<feature type="modified residue" description="Phosphotyrosine" evidence="21">
    <location>
        <position position="30"/>
    </location>
</feature>
<feature type="modified residue" description="Phosphoserine" evidence="22">
    <location>
        <position position="61"/>
    </location>
</feature>
<feature type="modified residue" description="Phosphoserine" evidence="22">
    <location>
        <position position="65"/>
    </location>
</feature>
<feature type="modified residue" description="Phosphoserine" evidence="22">
    <location>
        <position position="68"/>
    </location>
</feature>
<feature type="modified residue" description="Phosphoserine" evidence="22">
    <location>
        <position position="223"/>
    </location>
</feature>
<feature type="modified residue" description="Phosphoserine" evidence="22">
    <location>
        <position position="232"/>
    </location>
</feature>
<feature type="modified residue" description="Phosphoserine" evidence="22">
    <location>
        <position position="233"/>
    </location>
</feature>
<feature type="modified residue" description="Phosphoserine" evidence="22">
    <location>
        <position position="245"/>
    </location>
</feature>
<feature type="modified residue" description="Phosphothreonine" evidence="3">
    <location>
        <position position="249"/>
    </location>
</feature>
<feature type="modified residue" description="Phosphothreonine" evidence="20 22">
    <location>
        <position position="254"/>
    </location>
</feature>
<feature type="modified residue" description="Phosphoserine" evidence="22">
    <location>
        <position position="256"/>
    </location>
</feature>
<feature type="modified residue" description="Phosphoserine" evidence="20 22">
    <location>
        <position position="257"/>
    </location>
</feature>
<feature type="modified residue" description="Phosphoserine" evidence="20 22">
    <location>
        <position position="262"/>
    </location>
</feature>
<feature type="modified residue" description="Phosphoserine" evidence="22">
    <location>
        <position position="1026"/>
    </location>
</feature>
<feature type="modified residue" description="Phosphoserine" evidence="20 22">
    <location>
        <position position="1029"/>
    </location>
</feature>
<feature type="modified residue" description="Phosphoserine" evidence="20 22">
    <location>
        <position position="1034"/>
    </location>
</feature>
<feature type="modified residue" description="Phosphoserine" evidence="22">
    <location>
        <position position="1044"/>
    </location>
</feature>
<feature type="modified residue" description="Phosphoserine" evidence="3">
    <location>
        <position position="1069"/>
    </location>
</feature>
<feature type="splice variant" id="VSP_016709" description="In isoform 2 and isoform 3." evidence="17 18">
    <location>
        <begin position="1"/>
        <end position="44"/>
    </location>
</feature>
<feature type="splice variant" id="VSP_016710" description="In isoform 2 and isoform 3." evidence="17 18">
    <original>HKRKAGHKEKKEKERISENYSDKSDVENADESSSSILKPLI</original>
    <variation>MSTENVEGKPNNLGERGRARSSTFLRVFQPMFNHSIFTSAV</variation>
    <location>
        <begin position="45"/>
        <end position="85"/>
    </location>
</feature>
<feature type="splice variant" id="VSP_016711" description="In isoform 3." evidence="18">
    <original>MIADHQIETGLLKPDLK</original>
    <variation>LLGESRKVIRPAGFIRP</variation>
    <location>
        <begin position="185"/>
        <end position="201"/>
    </location>
</feature>
<feature type="splice variant" id="VSP_016712" description="In isoform 3." evidence="18">
    <location>
        <begin position="202"/>
        <end position="1079"/>
    </location>
</feature>
<feature type="sequence conflict" description="In Ref. 1; AAC40160." evidence="19" ref="1">
    <original>T</original>
    <variation>A</variation>
    <location>
        <position position="388"/>
    </location>
</feature>
<feature type="sequence conflict" description="In Ref. 1; AAC40160." evidence="19" ref="1">
    <original>H</original>
    <variation>N</variation>
    <location>
        <position position="546"/>
    </location>
</feature>
<feature type="sequence conflict" description="In Ref. 1; AAC40160." evidence="19" ref="1">
    <original>W</original>
    <variation>R</variation>
    <location>
        <position position="560"/>
    </location>
</feature>
<feature type="sequence conflict" description="In Ref. 1; AAC40160." evidence="19" ref="1">
    <original>M</original>
    <variation>L</variation>
    <location>
        <position position="564"/>
    </location>
</feature>
<feature type="sequence conflict" description="In Ref. 1; AAC40160." evidence="19" ref="1">
    <original>V</original>
    <variation>I</variation>
    <location>
        <position position="567"/>
    </location>
</feature>
<feature type="sequence conflict" description="In Ref. 1; AAC40160." evidence="19" ref="1">
    <original>S</original>
    <variation>P</variation>
    <location>
        <position position="589"/>
    </location>
</feature>
<feature type="sequence conflict" description="In Ref. 1; AAC40160." evidence="19" ref="1">
    <original>C</original>
    <variation>G</variation>
    <location>
        <position position="740"/>
    </location>
</feature>
<feature type="sequence conflict" description="In Ref. 1; AAC40160." evidence="19" ref="1">
    <original>G</original>
    <variation>E</variation>
    <location>
        <position position="775"/>
    </location>
</feature>
<feature type="sequence conflict" description="In Ref. 1; AAC40160." evidence="19" ref="1">
    <original>K</original>
    <variation>Q</variation>
    <location>
        <position position="814"/>
    </location>
</feature>
<feature type="sequence conflict" description="In Ref. 1; AAC40160." evidence="19" ref="1">
    <original>V</original>
    <variation>I</variation>
    <location>
        <position position="832"/>
    </location>
</feature>
<feature type="sequence conflict" description="In Ref. 1; AAC40160." evidence="19" ref="1">
    <original>F</original>
    <variation>L</variation>
    <location>
        <position position="835"/>
    </location>
</feature>
<feature type="sequence conflict" description="In Ref. 2; AAD31036." evidence="19" ref="2">
    <original>S</original>
    <variation>F</variation>
    <location>
        <position position="848"/>
    </location>
</feature>
<feature type="sequence conflict" description="In Ref. 2; AAD31036." evidence="19" ref="2">
    <original>Q</original>
    <variation>P</variation>
    <location>
        <position position="876"/>
    </location>
</feature>
<feature type="sequence conflict" description="In Ref. 1; AAC40160." evidence="19" ref="1">
    <original>F</original>
    <variation>L</variation>
    <location>
        <position position="884"/>
    </location>
</feature>
<feature type="sequence conflict" description="In Ref. 2; AAD31036." evidence="19" ref="2">
    <original>P</original>
    <variation>R</variation>
    <location>
        <position position="901"/>
    </location>
</feature>
<feature type="sequence conflict" description="In Ref. 2; AAD31036." evidence="19" ref="2">
    <original>FL</original>
    <variation>SW</variation>
    <location>
        <begin position="909"/>
        <end position="910"/>
    </location>
</feature>
<feature type="modified residue" description="Phosphoserine" evidence="22">
    <location sequence="O88343-2">
        <position position="21"/>
    </location>
</feature>
<feature type="modified residue" description="Phosphoserine" evidence="22">
    <location sequence="O88343-3">
        <position position="21"/>
    </location>
</feature>
<keyword id="KW-0025">Alternative splicing</keyword>
<keyword id="KW-1003">Cell membrane</keyword>
<keyword id="KW-0903">Direct protein sequencing</keyword>
<keyword id="KW-0325">Glycoprotein</keyword>
<keyword id="KW-0406">Ion transport</keyword>
<keyword id="KW-0472">Membrane</keyword>
<keyword id="KW-0597">Phosphoprotein</keyword>
<keyword id="KW-1185">Reference proteome</keyword>
<keyword id="KW-0915">Sodium</keyword>
<keyword id="KW-0739">Sodium transport</keyword>
<keyword id="KW-0769">Symport</keyword>
<keyword id="KW-0812">Transmembrane</keyword>
<keyword id="KW-1133">Transmembrane helix</keyword>
<keyword id="KW-0813">Transport</keyword>
<organism>
    <name type="scientific">Mus musculus</name>
    <name type="common">Mouse</name>
    <dbReference type="NCBI Taxonomy" id="10090"/>
    <lineage>
        <taxon>Eukaryota</taxon>
        <taxon>Metazoa</taxon>
        <taxon>Chordata</taxon>
        <taxon>Craniata</taxon>
        <taxon>Vertebrata</taxon>
        <taxon>Euteleostomi</taxon>
        <taxon>Mammalia</taxon>
        <taxon>Eutheria</taxon>
        <taxon>Euarchontoglires</taxon>
        <taxon>Glires</taxon>
        <taxon>Rodentia</taxon>
        <taxon>Myomorpha</taxon>
        <taxon>Muroidea</taxon>
        <taxon>Muridae</taxon>
        <taxon>Murinae</taxon>
        <taxon>Mus</taxon>
        <taxon>Mus</taxon>
    </lineage>
</organism>
<evidence type="ECO:0000250" key="1"/>
<evidence type="ECO:0000250" key="2">
    <source>
        <dbReference type="UniProtKB" id="Q9GL77"/>
    </source>
</evidence>
<evidence type="ECO:0000250" key="3">
    <source>
        <dbReference type="UniProtKB" id="Q9JI66"/>
    </source>
</evidence>
<evidence type="ECO:0000250" key="4">
    <source>
        <dbReference type="UniProtKB" id="Q9Y6R1"/>
    </source>
</evidence>
<evidence type="ECO:0000255" key="5"/>
<evidence type="ECO:0000256" key="6">
    <source>
        <dbReference type="SAM" id="MobiDB-lite"/>
    </source>
</evidence>
<evidence type="ECO:0000269" key="7">
    <source>
    </source>
</evidence>
<evidence type="ECO:0000269" key="8">
    <source>
    </source>
</evidence>
<evidence type="ECO:0000269" key="9">
    <source>
    </source>
</evidence>
<evidence type="ECO:0000269" key="10">
    <source>
    </source>
</evidence>
<evidence type="ECO:0000269" key="11">
    <source>
    </source>
</evidence>
<evidence type="ECO:0000269" key="12">
    <source>
    </source>
</evidence>
<evidence type="ECO:0000269" key="13">
    <source>
    </source>
</evidence>
<evidence type="ECO:0000269" key="14">
    <source>
    </source>
</evidence>
<evidence type="ECO:0000269" key="15">
    <source>
    </source>
</evidence>
<evidence type="ECO:0000269" key="16">
    <source>
    </source>
</evidence>
<evidence type="ECO:0000303" key="17">
    <source>
    </source>
</evidence>
<evidence type="ECO:0000303" key="18">
    <source>
    </source>
</evidence>
<evidence type="ECO:0000305" key="19"/>
<evidence type="ECO:0007744" key="20">
    <source>
    </source>
</evidence>
<evidence type="ECO:0007744" key="21">
    <source>
    </source>
</evidence>
<evidence type="ECO:0007744" key="22">
    <source>
    </source>
</evidence>